<reference key="1">
    <citation type="journal article" date="2000" name="Nature">
        <title>Complete genome sequence of Pseudomonas aeruginosa PAO1, an opportunistic pathogen.</title>
        <authorList>
            <person name="Stover C.K."/>
            <person name="Pham X.-Q.T."/>
            <person name="Erwin A.L."/>
            <person name="Mizoguchi S.D."/>
            <person name="Warrener P."/>
            <person name="Hickey M.J."/>
            <person name="Brinkman F.S.L."/>
            <person name="Hufnagle W.O."/>
            <person name="Kowalik D.J."/>
            <person name="Lagrou M."/>
            <person name="Garber R.L."/>
            <person name="Goltry L."/>
            <person name="Tolentino E."/>
            <person name="Westbrock-Wadman S."/>
            <person name="Yuan Y."/>
            <person name="Brody L.L."/>
            <person name="Coulter S.N."/>
            <person name="Folger K.R."/>
            <person name="Kas A."/>
            <person name="Larbig K."/>
            <person name="Lim R.M."/>
            <person name="Smith K.A."/>
            <person name="Spencer D.H."/>
            <person name="Wong G.K.-S."/>
            <person name="Wu Z."/>
            <person name="Paulsen I.T."/>
            <person name="Reizer J."/>
            <person name="Saier M.H. Jr."/>
            <person name="Hancock R.E.W."/>
            <person name="Lory S."/>
            <person name="Olson M.V."/>
        </authorList>
    </citation>
    <scope>NUCLEOTIDE SEQUENCE [LARGE SCALE GENOMIC DNA]</scope>
    <source>
        <strain>ATCC 15692 / DSM 22644 / CIP 104116 / JCM 14847 / LMG 12228 / 1C / PRS 101 / PAO1</strain>
    </source>
</reference>
<reference key="2">
    <citation type="journal article" date="2015" name="Proc. Natl. Acad. Sci. U.S.A.">
        <title>Essential genome of Pseudomonas aeruginosa in cystic fibrosis sputum.</title>
        <authorList>
            <person name="Turner K.H."/>
            <person name="Wessel A.K."/>
            <person name="Palmer G.C."/>
            <person name="Murray J.L."/>
            <person name="Whiteley M."/>
        </authorList>
    </citation>
    <scope>FUNCTION</scope>
    <scope>DISRUPTION PHENOTYPE</scope>
    <source>
        <strain>ATCC 15692 / DSM 22644 / CIP 104116 / JCM 14847 / LMG 12228 / 1C / PRS 101 / PAO1</strain>
    </source>
</reference>
<reference key="3">
    <citation type="journal article" date="2016" name="Acta Crystallogr. F Struct. Biol. Commun.">
        <title>Crystal structure of the flavoenzyme PA4991 from Pseudomonas aeruginosa.</title>
        <authorList>
            <person name="Jacewicz A."/>
            <person name="Schnell R."/>
            <person name="Lindqvist Y."/>
            <person name="Schneider G."/>
        </authorList>
    </citation>
    <scope>X-RAY CRYSTALLOGRAPHY (2.40 ANGSTROMS) IN COMPLEX WITH FAD</scope>
    <scope>FUNCTION</scope>
    <scope>COFACTOR</scope>
    <scope>SUBUNIT</scope>
    <source>
        <strain>ATCC 15692 / DSM 22644 / CIP 104116 / JCM 14847 / LMG 12228 / 1C / PRS 101 / PAO1</strain>
    </source>
</reference>
<organism>
    <name type="scientific">Pseudomonas aeruginosa (strain ATCC 15692 / DSM 22644 / CIP 104116 / JCM 14847 / LMG 12228 / 1C / PRS 101 / PAO1)</name>
    <dbReference type="NCBI Taxonomy" id="208964"/>
    <lineage>
        <taxon>Bacteria</taxon>
        <taxon>Pseudomonadati</taxon>
        <taxon>Pseudomonadota</taxon>
        <taxon>Gammaproteobacteria</taxon>
        <taxon>Pseudomonadales</taxon>
        <taxon>Pseudomonadaceae</taxon>
        <taxon>Pseudomonas</taxon>
    </lineage>
</organism>
<comment type="function">
    <text evidence="1 2">Probably functions as a FAD-dependent oxidoreductase, whose physiological substrate is unknown. Does not display amino-acid oxidase or glycerol-3-phosphate dehydrogenase activities (PubMed:26841760). Is essential for growth of P.aeruginosa in the sputum of cystic fibrosis patients (PubMed:25775563).</text>
</comment>
<comment type="cofactor">
    <cofactor evidence="4">
        <name>FAD</name>
        <dbReference type="ChEBI" id="CHEBI:57692"/>
    </cofactor>
    <text evidence="2">Binds 1 FAD per subunit.</text>
</comment>
<comment type="subunit">
    <text evidence="2">Monomer.</text>
</comment>
<comment type="disruption phenotype">
    <text evidence="1">Cells lacking this gene show growth defect in natural and synthetic cystic fibrosis sputum.</text>
</comment>
<comment type="similarity">
    <text evidence="3">Belongs to the DAO family.</text>
</comment>
<evidence type="ECO:0000269" key="1">
    <source>
    </source>
</evidence>
<evidence type="ECO:0000269" key="2">
    <source>
    </source>
</evidence>
<evidence type="ECO:0000305" key="3"/>
<evidence type="ECO:0000305" key="4">
    <source>
    </source>
</evidence>
<evidence type="ECO:0000312" key="5">
    <source>
        <dbReference type="EMBL" id="AAG08376.1"/>
    </source>
</evidence>
<evidence type="ECO:0007829" key="6">
    <source>
        <dbReference type="PDB" id="5EZ7"/>
    </source>
</evidence>
<dbReference type="EC" id="1.-.-.-" evidence="3"/>
<dbReference type="EMBL" id="AE004091">
    <property type="protein sequence ID" value="AAG08376.1"/>
    <property type="molecule type" value="Genomic_DNA"/>
</dbReference>
<dbReference type="PIR" id="D83021">
    <property type="entry name" value="D83021"/>
</dbReference>
<dbReference type="RefSeq" id="NP_253678.1">
    <property type="nucleotide sequence ID" value="NC_002516.2"/>
</dbReference>
<dbReference type="RefSeq" id="WP_003114540.1">
    <property type="nucleotide sequence ID" value="NZ_QZGE01000002.1"/>
</dbReference>
<dbReference type="PDB" id="5EZ7">
    <property type="method" value="X-ray"/>
    <property type="resolution" value="2.40 A"/>
    <property type="chains" value="A=1-391"/>
</dbReference>
<dbReference type="PDBsum" id="5EZ7"/>
<dbReference type="SMR" id="Q9HUH4"/>
<dbReference type="STRING" id="208964.PA4991"/>
<dbReference type="PaxDb" id="208964-PA4991"/>
<dbReference type="DNASU" id="880166"/>
<dbReference type="GeneID" id="880166"/>
<dbReference type="KEGG" id="pae:PA4991"/>
<dbReference type="PATRIC" id="fig|208964.12.peg.5231"/>
<dbReference type="PseudoCAP" id="PA4991"/>
<dbReference type="HOGENOM" id="CLU_705707_0_0_6"/>
<dbReference type="InParanoid" id="Q9HUH4"/>
<dbReference type="OrthoDB" id="211690at2"/>
<dbReference type="PhylomeDB" id="Q9HUH4"/>
<dbReference type="BioCyc" id="PAER208964:G1FZ6-5107-MONOMER"/>
<dbReference type="Proteomes" id="UP000002438">
    <property type="component" value="Chromosome"/>
</dbReference>
<dbReference type="GO" id="GO:0005737">
    <property type="term" value="C:cytoplasm"/>
    <property type="evidence" value="ECO:0000318"/>
    <property type="project" value="GO_Central"/>
</dbReference>
<dbReference type="GO" id="GO:0071949">
    <property type="term" value="F:FAD binding"/>
    <property type="evidence" value="ECO:0000314"/>
    <property type="project" value="UniProtKB"/>
</dbReference>
<dbReference type="GO" id="GO:0016491">
    <property type="term" value="F:oxidoreductase activity"/>
    <property type="evidence" value="ECO:0007669"/>
    <property type="project" value="UniProtKB-KW"/>
</dbReference>
<dbReference type="Gene3D" id="3.50.50.60">
    <property type="entry name" value="FAD/NAD(P)-binding domain"/>
    <property type="match status" value="2"/>
</dbReference>
<dbReference type="InterPro" id="IPR006076">
    <property type="entry name" value="FAD-dep_OxRdtase"/>
</dbReference>
<dbReference type="InterPro" id="IPR036188">
    <property type="entry name" value="FAD/NAD-bd_sf"/>
</dbReference>
<dbReference type="PANTHER" id="PTHR13847:SF289">
    <property type="entry name" value="GLYCINE OXIDASE"/>
    <property type="match status" value="1"/>
</dbReference>
<dbReference type="PANTHER" id="PTHR13847">
    <property type="entry name" value="SARCOSINE DEHYDROGENASE-RELATED"/>
    <property type="match status" value="1"/>
</dbReference>
<dbReference type="Pfam" id="PF01266">
    <property type="entry name" value="DAO"/>
    <property type="match status" value="1"/>
</dbReference>
<dbReference type="SUPFAM" id="SSF51905">
    <property type="entry name" value="FAD/NAD(P)-binding domain"/>
    <property type="match status" value="1"/>
</dbReference>
<proteinExistence type="evidence at protein level"/>
<gene>
    <name evidence="5" type="ordered locus">PA4991</name>
</gene>
<accession>Q9HUH4</accession>
<feature type="chain" id="PRO_0000439959" description="Probable FAD-dependent oxidoreductase PA4991">
    <location>
        <begin position="1"/>
        <end position="391"/>
    </location>
</feature>
<feature type="binding site" evidence="2">
    <location>
        <position position="17"/>
    </location>
    <ligand>
        <name>FAD</name>
        <dbReference type="ChEBI" id="CHEBI:57692"/>
    </ligand>
</feature>
<feature type="binding site" evidence="2">
    <location>
        <position position="36"/>
    </location>
    <ligand>
        <name>FAD</name>
        <dbReference type="ChEBI" id="CHEBI:57692"/>
    </ligand>
</feature>
<feature type="binding site" evidence="2">
    <location>
        <begin position="44"/>
        <end position="45"/>
    </location>
    <ligand>
        <name>FAD</name>
        <dbReference type="ChEBI" id="CHEBI:57692"/>
    </ligand>
</feature>
<feature type="binding site" evidence="2">
    <location>
        <begin position="49"/>
        <end position="51"/>
    </location>
    <ligand>
        <name>FAD</name>
        <dbReference type="ChEBI" id="CHEBI:57692"/>
    </ligand>
</feature>
<feature type="binding site" evidence="2">
    <location>
        <begin position="346"/>
        <end position="347"/>
    </location>
    <ligand>
        <name>FAD</name>
        <dbReference type="ChEBI" id="CHEBI:57692"/>
    </ligand>
</feature>
<feature type="strand" evidence="6">
    <location>
        <begin position="8"/>
        <end position="12"/>
    </location>
</feature>
<feature type="helix" evidence="6">
    <location>
        <begin position="16"/>
        <end position="27"/>
    </location>
</feature>
<feature type="strand" evidence="6">
    <location>
        <begin position="32"/>
        <end position="38"/>
    </location>
</feature>
<feature type="turn" evidence="6">
    <location>
        <begin position="41"/>
        <end position="44"/>
    </location>
</feature>
<feature type="helix" evidence="6">
    <location>
        <begin position="45"/>
        <end position="47"/>
    </location>
</feature>
<feature type="helix" evidence="6">
    <location>
        <begin position="69"/>
        <end position="72"/>
    </location>
</feature>
<feature type="helix" evidence="6">
    <location>
        <begin position="74"/>
        <end position="81"/>
    </location>
</feature>
<feature type="strand" evidence="6">
    <location>
        <begin position="83"/>
        <end position="88"/>
    </location>
</feature>
<feature type="strand" evidence="6">
    <location>
        <begin position="95"/>
        <end position="98"/>
    </location>
</feature>
<feature type="strand" evidence="6">
    <location>
        <begin position="101"/>
        <end position="104"/>
    </location>
</feature>
<feature type="strand" evidence="6">
    <location>
        <begin position="126"/>
        <end position="128"/>
    </location>
</feature>
<feature type="helix" evidence="6">
    <location>
        <begin position="130"/>
        <end position="132"/>
    </location>
</feature>
<feature type="helix" evidence="6">
    <location>
        <begin position="135"/>
        <end position="137"/>
    </location>
</feature>
<feature type="strand" evidence="6">
    <location>
        <begin position="144"/>
        <end position="148"/>
    </location>
</feature>
<feature type="strand" evidence="6">
    <location>
        <begin position="152"/>
        <end position="154"/>
    </location>
</feature>
<feature type="helix" evidence="6">
    <location>
        <begin position="156"/>
        <end position="167"/>
    </location>
</feature>
<feature type="helix" evidence="6">
    <location>
        <begin position="168"/>
        <end position="170"/>
    </location>
</feature>
<feature type="strand" evidence="6">
    <location>
        <begin position="171"/>
        <end position="173"/>
    </location>
</feature>
<feature type="strand" evidence="6">
    <location>
        <begin position="177"/>
        <end position="182"/>
    </location>
</feature>
<feature type="strand" evidence="6">
    <location>
        <begin position="185"/>
        <end position="191"/>
    </location>
</feature>
<feature type="strand" evidence="6">
    <location>
        <begin position="194"/>
        <end position="197"/>
    </location>
</feature>
<feature type="strand" evidence="6">
    <location>
        <begin position="199"/>
        <end position="203"/>
    </location>
</feature>
<feature type="helix" evidence="6">
    <location>
        <begin position="206"/>
        <end position="208"/>
    </location>
</feature>
<feature type="helix" evidence="6">
    <location>
        <begin position="209"/>
        <end position="215"/>
    </location>
</feature>
<feature type="strand" evidence="6">
    <location>
        <begin position="223"/>
        <end position="237"/>
    </location>
</feature>
<feature type="strand" evidence="6">
    <location>
        <begin position="243"/>
        <end position="245"/>
    </location>
</feature>
<feature type="strand" evidence="6">
    <location>
        <begin position="248"/>
        <end position="251"/>
    </location>
</feature>
<feature type="strand" evidence="6">
    <location>
        <begin position="253"/>
        <end position="260"/>
    </location>
</feature>
<feature type="strand" evidence="6">
    <location>
        <begin position="266"/>
        <end position="272"/>
    </location>
</feature>
<feature type="helix" evidence="6">
    <location>
        <begin position="273"/>
        <end position="275"/>
    </location>
</feature>
<feature type="helix" evidence="6">
    <location>
        <begin position="277"/>
        <end position="281"/>
    </location>
</feature>
<feature type="helix" evidence="6">
    <location>
        <begin position="284"/>
        <end position="298"/>
    </location>
</feature>
<feature type="strand" evidence="6">
    <location>
        <begin position="308"/>
        <end position="319"/>
    </location>
</feature>
<feature type="strand" evidence="6">
    <location>
        <begin position="331"/>
        <end position="335"/>
    </location>
</feature>
<feature type="strand" evidence="6">
    <location>
        <begin position="338"/>
        <end position="342"/>
    </location>
</feature>
<feature type="helix" evidence="6">
    <location>
        <begin position="346"/>
        <end position="348"/>
    </location>
</feature>
<feature type="helix" evidence="6">
    <location>
        <begin position="349"/>
        <end position="363"/>
    </location>
</feature>
<feature type="helix" evidence="6">
    <location>
        <begin position="385"/>
        <end position="388"/>
    </location>
</feature>
<sequence>MPQALSTDILIVGGGIAGLWLNARLRRAGYATVLVESASLGGGQSVKSQGIIHGGAKYALHGALTGASEAIADMPRRWRACLGSDGELDLRGVRLLSEAHYLWSPGGLAGSLTSFFASKAVRSRVEQAKGEDLPPALRDKGFKGKAYRLTEIVFDVPDLIRRLAELAGDSLLAGERIEPLREGRELAGLCVDGREIRAQRVVLSAGAGNEALLRELGLEQPAMQRRPLHMVMVKAATLKPLYAHCLGAGPKPRITVTTHPTRDGQSVWYLGGDIAETDGVARDEAAQIAEARRELAKLLPWIDLGQAQWATLRVDRAEPAQSNLLRPDNAFLAEQGRLLVGWPTKLALAPDFADRVCARLEEDGIRPSEHAALPQLPRPPLAEPAWEVAFA</sequence>
<protein>
    <recommendedName>
        <fullName evidence="3">Probable FAD-dependent oxidoreductase PA4991</fullName>
        <ecNumber evidence="3">1.-.-.-</ecNumber>
    </recommendedName>
</protein>
<keyword id="KW-0002">3D-structure</keyword>
<keyword id="KW-0274">FAD</keyword>
<keyword id="KW-0285">Flavoprotein</keyword>
<keyword id="KW-0560">Oxidoreductase</keyword>
<keyword id="KW-1185">Reference proteome</keyword>
<name>Y4991_PSEAE</name>